<feature type="signal peptide" evidence="2">
    <location>
        <begin position="1"/>
        <end position="23"/>
    </location>
</feature>
<feature type="chain" id="PRO_0000379790" description="N16.5 matrix protein">
    <location>
        <begin position="24"/>
        <end position="129"/>
    </location>
</feature>
<feature type="repeat" description="1">
    <location>
        <begin position="91"/>
        <end position="92"/>
    </location>
</feature>
<feature type="repeat" description="2">
    <location>
        <begin position="93"/>
        <end position="94"/>
    </location>
</feature>
<feature type="repeat" description="3">
    <location>
        <begin position="95"/>
        <end position="96"/>
    </location>
</feature>
<feature type="repeat" description="4">
    <location>
        <begin position="97"/>
        <end position="98"/>
    </location>
</feature>
<feature type="repeat" description="5">
    <location>
        <begin position="99"/>
        <end position="100"/>
    </location>
</feature>
<feature type="region of interest" description="5 X 2 AA tandem repeats of N-G">
    <location>
        <begin position="91"/>
        <end position="100"/>
    </location>
</feature>
<comment type="function">
    <text evidence="1 3 4">May be specifically involved in the formation of the nacreous layer.</text>
</comment>
<comment type="subunit">
    <text evidence="3">Heterooligomer; disulfide-linked. Pif97, Pif80, N16 and other proteins form a complex.</text>
</comment>
<comment type="subcellular location">
    <subcellularLocation>
        <location>Secreted</location>
        <location>Extracellular space</location>
        <location>Extracellular matrix</location>
    </subcellularLocation>
</comment>
<comment type="tissue specificity">
    <text>Component of conchiolin, the organic matrix of nacre. Specifically expressed in mantle epithelium.</text>
</comment>
<comment type="similarity">
    <text evidence="5">Belongs to the N16 matrix protein family.</text>
</comment>
<comment type="online information" name="Protein Spotlight">
    <link uri="https://www.proteinspotlight.org/back_issues/112"/>
    <text>String of intrusion - Issue 112 of December 2009</text>
</comment>
<name>MA165_PINFU</name>
<protein>
    <recommendedName>
        <fullName>N16.5 matrix protein</fullName>
    </recommendedName>
    <alternativeName>
        <fullName>N14#5</fullName>
    </alternativeName>
    <alternativeName>
        <fullName>N14#7</fullName>
    </alternativeName>
    <alternativeName>
        <fullName>Pearlin</fullName>
    </alternativeName>
</protein>
<reference key="1">
    <citation type="journal article" date="2000" name="Mar. Biotechnol.">
        <title>Complementary DNA cloning and characterization of pearlin, a new class of matrix protein in the nacreous layer of oyster pearls.</title>
        <authorList>
            <person name="Miyashita T."/>
            <person name="Takagi R."/>
            <person name="Okushima M."/>
            <person name="Nakano S."/>
            <person name="Miyamoto H."/>
            <person name="Nishikawa E."/>
            <person name="Matsushiro A."/>
        </authorList>
    </citation>
    <scope>NUCLEOTIDE SEQUENCE [MRNA]</scope>
    <source>
        <tissue>Mantle</tissue>
    </source>
</reference>
<reference key="2">
    <citation type="submission" date="1999-02" db="EMBL/GenBank/DDBJ databases">
        <title>14 kD matrix protein family in nacreous layer of Japanese peal oyster, Pinctada fucata.</title>
        <authorList>
            <person name="Hayashi N."/>
            <person name="Samata T."/>
        </authorList>
    </citation>
    <scope>NUCLEOTIDE SEQUENCE [MRNA]</scope>
    <source>
        <tissue>Mantle</tissue>
    </source>
</reference>
<reference key="3">
    <citation type="journal article" date="2009" name="Science">
        <title>An acidic matrix protein, Pif, is a key macromolecule for nacre formation.</title>
        <authorList>
            <person name="Suzuki M."/>
            <person name="Saruwatari K."/>
            <person name="Kogure T."/>
            <person name="Yamamoto Y."/>
            <person name="Nishimura T."/>
            <person name="Kato T."/>
            <person name="Nagasawa H."/>
        </authorList>
    </citation>
    <scope>SUBUNIT</scope>
    <scope>FUNCTION</scope>
</reference>
<reference key="4">
    <citation type="journal article" date="2009" name="Science">
        <title>The molecular basis of nacre formation.</title>
        <authorList>
            <person name="Kroger N."/>
        </authorList>
    </citation>
    <scope>FUNCTION</scope>
</reference>
<evidence type="ECO:0000250" key="1"/>
<evidence type="ECO:0000255" key="2"/>
<evidence type="ECO:0000269" key="3">
    <source>
    </source>
</evidence>
<evidence type="ECO:0000269" key="4">
    <source>
    </source>
</evidence>
<evidence type="ECO:0000305" key="5"/>
<sequence length="129" mass="15388">MTCTLRWTITALVLLGICHLARPAFRTKCGRYSYCWIPYDIERDRYDNGDKKCCFCRNAWSPWQCKEDERYEWLRCGHKFYYMCCYTDDDNGNGNGNGNGFNYLKSLYGGYGNGNGEFWEEYIDERYDK</sequence>
<dbReference type="EMBL" id="AB020779">
    <property type="protein sequence ID" value="BAA75626.1"/>
    <property type="molecule type" value="mRNA"/>
</dbReference>
<dbReference type="EMBL" id="AB023252">
    <property type="protein sequence ID" value="BAA83737.1"/>
    <property type="molecule type" value="mRNA"/>
</dbReference>
<dbReference type="EMBL" id="AB023253">
    <property type="protein sequence ID" value="BAA83738.1"/>
    <property type="molecule type" value="mRNA"/>
</dbReference>
<dbReference type="EMBL" id="AB023254">
    <property type="protein sequence ID" value="BAA83739.1"/>
    <property type="molecule type" value="mRNA"/>
</dbReference>
<dbReference type="GO" id="GO:0005576">
    <property type="term" value="C:extracellular region"/>
    <property type="evidence" value="ECO:0007669"/>
    <property type="project" value="UniProtKB-KW"/>
</dbReference>
<keyword id="KW-1015">Disulfide bond</keyword>
<keyword id="KW-0272">Extracellular matrix</keyword>
<keyword id="KW-0677">Repeat</keyword>
<keyword id="KW-0964">Secreted</keyword>
<keyword id="KW-0732">Signal</keyword>
<accession>O97048</accession>
<organism>
    <name type="scientific">Pinctada fucata</name>
    <name type="common">Akoya pearl oyster</name>
    <name type="synonym">Pinctada imbricata fucata</name>
    <dbReference type="NCBI Taxonomy" id="50426"/>
    <lineage>
        <taxon>Eukaryota</taxon>
        <taxon>Metazoa</taxon>
        <taxon>Spiralia</taxon>
        <taxon>Lophotrochozoa</taxon>
        <taxon>Mollusca</taxon>
        <taxon>Bivalvia</taxon>
        <taxon>Autobranchia</taxon>
        <taxon>Pteriomorphia</taxon>
        <taxon>Pterioida</taxon>
        <taxon>Pterioidea</taxon>
        <taxon>Pteriidae</taxon>
        <taxon>Pinctada</taxon>
    </lineage>
</organism>
<proteinExistence type="evidence at protein level"/>